<reference key="1">
    <citation type="submission" date="2005-11" db="EMBL/GenBank/DDBJ databases">
        <authorList>
            <consortium name="NIH - Mammalian Gene Collection (MGC) project"/>
        </authorList>
    </citation>
    <scope>NUCLEOTIDE SEQUENCE [LARGE SCALE MRNA]</scope>
    <source>
        <strain>Crossbred X Angus</strain>
        <tissue>Liver</tissue>
    </source>
</reference>
<evidence type="ECO:0000250" key="1"/>
<evidence type="ECO:0000250" key="2">
    <source>
        <dbReference type="UniProtKB" id="Q96H22"/>
    </source>
</evidence>
<evidence type="ECO:0000305" key="3"/>
<proteinExistence type="evidence at transcript level"/>
<dbReference type="EMBL" id="BC109516">
    <property type="protein sequence ID" value="AAI09517.1"/>
    <property type="molecule type" value="mRNA"/>
</dbReference>
<dbReference type="RefSeq" id="NP_001033188.1">
    <property type="nucleotide sequence ID" value="NM_001038099.2"/>
</dbReference>
<dbReference type="SMR" id="Q32LL9"/>
<dbReference type="FunCoup" id="Q32LL9">
    <property type="interactions" value="1130"/>
</dbReference>
<dbReference type="STRING" id="9913.ENSBTAP00000015452"/>
<dbReference type="PaxDb" id="9913-ENSBTAP00000015452"/>
<dbReference type="GeneID" id="513551"/>
<dbReference type="KEGG" id="bta:513551"/>
<dbReference type="CTD" id="55839"/>
<dbReference type="eggNOG" id="ENOG502QSE8">
    <property type="taxonomic scope" value="Eukaryota"/>
</dbReference>
<dbReference type="InParanoid" id="Q32LL9"/>
<dbReference type="OrthoDB" id="6585699at2759"/>
<dbReference type="Proteomes" id="UP000009136">
    <property type="component" value="Unplaced"/>
</dbReference>
<dbReference type="GO" id="GO:0000776">
    <property type="term" value="C:kinetochore"/>
    <property type="evidence" value="ECO:0007669"/>
    <property type="project" value="UniProtKB-KW"/>
</dbReference>
<dbReference type="GO" id="GO:0005654">
    <property type="term" value="C:nucleoplasm"/>
    <property type="evidence" value="ECO:0000318"/>
    <property type="project" value="GO_Central"/>
</dbReference>
<dbReference type="GO" id="GO:0034080">
    <property type="term" value="P:CENP-A containing chromatin assembly"/>
    <property type="evidence" value="ECO:0007669"/>
    <property type="project" value="InterPro"/>
</dbReference>
<dbReference type="GO" id="GO:0007059">
    <property type="term" value="P:chromosome segregation"/>
    <property type="evidence" value="ECO:0007669"/>
    <property type="project" value="InterPro"/>
</dbReference>
<dbReference type="InterPro" id="IPR052011">
    <property type="entry name" value="CENP-NAC/CAD_complex"/>
</dbReference>
<dbReference type="InterPro" id="IPR007902">
    <property type="entry name" value="Chl4/mis15/CENP-N"/>
</dbReference>
<dbReference type="PANTHER" id="PTHR46790">
    <property type="entry name" value="CENTROMERE PROTEIN N"/>
    <property type="match status" value="1"/>
</dbReference>
<dbReference type="PANTHER" id="PTHR46790:SF1">
    <property type="entry name" value="CENTROMERE PROTEIN N"/>
    <property type="match status" value="1"/>
</dbReference>
<dbReference type="Pfam" id="PF05238">
    <property type="entry name" value="CENP-N"/>
    <property type="match status" value="1"/>
</dbReference>
<feature type="chain" id="PRO_0000249493" description="Centromere protein N">
    <location>
        <begin position="1"/>
        <end position="339"/>
    </location>
</feature>
<feature type="modified residue" description="Phosphoserine" evidence="2">
    <location>
        <position position="226"/>
    </location>
</feature>
<feature type="modified residue" description="Phosphoserine" evidence="2">
    <location>
        <position position="235"/>
    </location>
</feature>
<accession>Q32LL9</accession>
<name>CENPN_BOVIN</name>
<sequence>MDETLAEFFRRTILKIPMTEMMTILKTWNFMSENQLQTVNFRQRKESIVQDLVLLCEENHASLNDAAHLDIIYTQFHRHQKIWDVFQMSKAPGDDIDLFDMEQFKSSFKKILQRALKNVTVSFRDAEENSVWIRIAWGTQYKKPNQYKPAYVVYYSQTPYAFTSSSRLKSNLPLLGQALTVASKHHQIVKMDLRSRYLDSLKAIVFKQYNQSFETHNCTTSLQEGSLGLDINMDSRIIHENKVEKERVQRVTQEIFGDYPQPRLEFAQYKLETKFKSDLNGGILAEREEPLRCLVKFSSPHLLEALKSLAPAGIADAPLSPLLTCIPNKGKNYFKIRDK</sequence>
<organism>
    <name type="scientific">Bos taurus</name>
    <name type="common">Bovine</name>
    <dbReference type="NCBI Taxonomy" id="9913"/>
    <lineage>
        <taxon>Eukaryota</taxon>
        <taxon>Metazoa</taxon>
        <taxon>Chordata</taxon>
        <taxon>Craniata</taxon>
        <taxon>Vertebrata</taxon>
        <taxon>Euteleostomi</taxon>
        <taxon>Mammalia</taxon>
        <taxon>Eutheria</taxon>
        <taxon>Laurasiatheria</taxon>
        <taxon>Artiodactyla</taxon>
        <taxon>Ruminantia</taxon>
        <taxon>Pecora</taxon>
        <taxon>Bovidae</taxon>
        <taxon>Bovinae</taxon>
        <taxon>Bos</taxon>
    </lineage>
</organism>
<keyword id="KW-0137">Centromere</keyword>
<keyword id="KW-0158">Chromosome</keyword>
<keyword id="KW-0995">Kinetochore</keyword>
<keyword id="KW-0539">Nucleus</keyword>
<keyword id="KW-0597">Phosphoprotein</keyword>
<keyword id="KW-1185">Reference proteome</keyword>
<comment type="function">
    <text evidence="2">Component of the CENPA-NAC (nucleosome-associated) complex, a complex that plays a central role in assembly of kinetochore proteins, mitotic progression and chromosome segregation. The CENPA-NAC complex recruits the CENPA-CAD (nucleosome distal) complex and may be involved in incorporation of newly synthesized CENPA into centromeres. CENPN is the first protein to bind specifically to CENPA nucleosomes and the direct binding of CENPA nucleosomes by CENPN is required for centromere assembly. Required for chromosome congression and efficiently align the chromosomes on a metaphase plate.</text>
</comment>
<comment type="subunit">
    <text evidence="2">Component of the CENPA-NAC complex, at least composed of CENPA, CENPC, CENPH, CENPM, CENPN, CENPT and CENPU. The CENPA-NAC complex interacts with the CENPA-CAD complex, composed of CENPI, CENPK, CENPL, CENPO, CENPP, CENPQ, CENPR and CENPS. Interacts directly with CENPA. Identified in a centromere complex containing histones H2A, H2B and H4, and at least CENPA, CENPB, CENPC, CENPT, CENPN, HJURP, SUPT16H, SSRP1 and RSF1.</text>
</comment>
<comment type="subcellular location">
    <subcellularLocation>
        <location evidence="1">Nucleus</location>
    </subcellularLocation>
    <subcellularLocation>
        <location evidence="1">Chromosome</location>
        <location evidence="1">Centromere</location>
    </subcellularLocation>
    <subcellularLocation>
        <location evidence="1">Chromosome</location>
        <location evidence="1">Centromere</location>
        <location evidence="1">Kinetochore</location>
    </subcellularLocation>
    <text evidence="1">Localizes exclusively in the kinetochore domain of centromeres. Kinetochore-bound levels decrease when cells enter mitosis and increase again when cells exit mitosis.</text>
</comment>
<comment type="similarity">
    <text evidence="3">Belongs to the CENP-N/CHL4 family.</text>
</comment>
<protein>
    <recommendedName>
        <fullName>Centromere protein N</fullName>
        <shortName>CENP-N</shortName>
    </recommendedName>
</protein>
<gene>
    <name type="primary">CENPN</name>
</gene>